<keyword id="KW-0067">ATP-binding</keyword>
<keyword id="KW-0436">Ligase</keyword>
<keyword id="KW-0479">Metal-binding</keyword>
<keyword id="KW-0547">Nucleotide-binding</keyword>
<keyword id="KW-1185">Reference proteome</keyword>
<keyword id="KW-0862">Zinc</keyword>
<comment type="function">
    <text evidence="1">Catalyzes the ATP-dependent condensation of GlcN-Ins and L-cysteine to form L-Cys-GlcN-Ins.</text>
</comment>
<comment type="catalytic activity">
    <reaction evidence="1">
        <text>1D-myo-inositol 2-amino-2-deoxy-alpha-D-glucopyranoside + L-cysteine + ATP = 1D-myo-inositol 2-(L-cysteinylamino)-2-deoxy-alpha-D-glucopyranoside + AMP + diphosphate + H(+)</text>
        <dbReference type="Rhea" id="RHEA:26176"/>
        <dbReference type="ChEBI" id="CHEBI:15378"/>
        <dbReference type="ChEBI" id="CHEBI:30616"/>
        <dbReference type="ChEBI" id="CHEBI:33019"/>
        <dbReference type="ChEBI" id="CHEBI:35235"/>
        <dbReference type="ChEBI" id="CHEBI:58886"/>
        <dbReference type="ChEBI" id="CHEBI:58887"/>
        <dbReference type="ChEBI" id="CHEBI:456215"/>
        <dbReference type="EC" id="6.3.1.13"/>
    </reaction>
</comment>
<comment type="cofactor">
    <cofactor evidence="1">
        <name>Zn(2+)</name>
        <dbReference type="ChEBI" id="CHEBI:29105"/>
    </cofactor>
    <text evidence="1">Binds 1 zinc ion per subunit.</text>
</comment>
<comment type="subunit">
    <text evidence="1">Monomer.</text>
</comment>
<comment type="similarity">
    <text evidence="1">Belongs to the class-I aminoacyl-tRNA synthetase family. MshC subfamily.</text>
</comment>
<accession>Q0RLV2</accession>
<evidence type="ECO:0000255" key="1">
    <source>
        <dbReference type="HAMAP-Rule" id="MF_01697"/>
    </source>
</evidence>
<organism>
    <name type="scientific">Frankia alni (strain DSM 45986 / CECT 9034 / ACN14a)</name>
    <dbReference type="NCBI Taxonomy" id="326424"/>
    <lineage>
        <taxon>Bacteria</taxon>
        <taxon>Bacillati</taxon>
        <taxon>Actinomycetota</taxon>
        <taxon>Actinomycetes</taxon>
        <taxon>Frankiales</taxon>
        <taxon>Frankiaceae</taxon>
        <taxon>Frankia</taxon>
    </lineage>
</organism>
<name>MSHC_FRAAA</name>
<gene>
    <name evidence="1" type="primary">mshC</name>
    <name type="ordered locus">FRAAL2858</name>
</gene>
<protein>
    <recommendedName>
        <fullName evidence="1">L-cysteine:1D-myo-inositol 2-amino-2-deoxy-alpha-D-glucopyranoside ligase</fullName>
        <shortName evidence="1">L-Cys:GlcN-Ins ligase</shortName>
        <ecNumber evidence="1">6.3.1.13</ecNumber>
    </recommendedName>
    <alternativeName>
        <fullName evidence="1">Mycothiol ligase</fullName>
        <shortName evidence="1">MSH ligase</shortName>
    </alternativeName>
</protein>
<proteinExistence type="inferred from homology"/>
<dbReference type="EC" id="6.3.1.13" evidence="1"/>
<dbReference type="EMBL" id="CT573213">
    <property type="protein sequence ID" value="CAJ61502.1"/>
    <property type="molecule type" value="Genomic_DNA"/>
</dbReference>
<dbReference type="SMR" id="Q0RLV2"/>
<dbReference type="STRING" id="326424.FRAAL2858"/>
<dbReference type="KEGG" id="fal:FRAAL2858"/>
<dbReference type="eggNOG" id="COG0215">
    <property type="taxonomic scope" value="Bacteria"/>
</dbReference>
<dbReference type="HOGENOM" id="CLU_013528_0_0_11"/>
<dbReference type="Proteomes" id="UP000000657">
    <property type="component" value="Chromosome"/>
</dbReference>
<dbReference type="GO" id="GO:0005829">
    <property type="term" value="C:cytosol"/>
    <property type="evidence" value="ECO:0007669"/>
    <property type="project" value="TreeGrafter"/>
</dbReference>
<dbReference type="GO" id="GO:0005524">
    <property type="term" value="F:ATP binding"/>
    <property type="evidence" value="ECO:0007669"/>
    <property type="project" value="UniProtKB-KW"/>
</dbReference>
<dbReference type="GO" id="GO:0035446">
    <property type="term" value="F:cysteine-glucosaminylinositol ligase activity"/>
    <property type="evidence" value="ECO:0007669"/>
    <property type="project" value="UniProtKB-UniRule"/>
</dbReference>
<dbReference type="GO" id="GO:0004817">
    <property type="term" value="F:cysteine-tRNA ligase activity"/>
    <property type="evidence" value="ECO:0007669"/>
    <property type="project" value="TreeGrafter"/>
</dbReference>
<dbReference type="GO" id="GO:0008270">
    <property type="term" value="F:zinc ion binding"/>
    <property type="evidence" value="ECO:0007669"/>
    <property type="project" value="UniProtKB-UniRule"/>
</dbReference>
<dbReference type="GO" id="GO:0006423">
    <property type="term" value="P:cysteinyl-tRNA aminoacylation"/>
    <property type="evidence" value="ECO:0007669"/>
    <property type="project" value="TreeGrafter"/>
</dbReference>
<dbReference type="GO" id="GO:0010125">
    <property type="term" value="P:mycothiol biosynthetic process"/>
    <property type="evidence" value="ECO:0007669"/>
    <property type="project" value="UniProtKB-UniRule"/>
</dbReference>
<dbReference type="Gene3D" id="1.20.120.640">
    <property type="entry name" value="Anticodon-binding domain of a subclass of class I aminoacyl-tRNA synthetases"/>
    <property type="match status" value="1"/>
</dbReference>
<dbReference type="Gene3D" id="3.40.50.620">
    <property type="entry name" value="HUPs"/>
    <property type="match status" value="1"/>
</dbReference>
<dbReference type="HAMAP" id="MF_01697">
    <property type="entry name" value="MshC"/>
    <property type="match status" value="1"/>
</dbReference>
<dbReference type="InterPro" id="IPR024909">
    <property type="entry name" value="Cys-tRNA/MSH_ligase"/>
</dbReference>
<dbReference type="InterPro" id="IPR017812">
    <property type="entry name" value="Mycothiol_ligase_MshC"/>
</dbReference>
<dbReference type="InterPro" id="IPR014729">
    <property type="entry name" value="Rossmann-like_a/b/a_fold"/>
</dbReference>
<dbReference type="InterPro" id="IPR032678">
    <property type="entry name" value="tRNA-synt_1_cat_dom"/>
</dbReference>
<dbReference type="NCBIfam" id="TIGR03447">
    <property type="entry name" value="mycothiol_MshC"/>
    <property type="match status" value="1"/>
</dbReference>
<dbReference type="PANTHER" id="PTHR10890:SF3">
    <property type="entry name" value="CYSTEINE--TRNA LIGASE, CYTOPLASMIC"/>
    <property type="match status" value="1"/>
</dbReference>
<dbReference type="PANTHER" id="PTHR10890">
    <property type="entry name" value="CYSTEINYL-TRNA SYNTHETASE"/>
    <property type="match status" value="1"/>
</dbReference>
<dbReference type="Pfam" id="PF01406">
    <property type="entry name" value="tRNA-synt_1e"/>
    <property type="match status" value="1"/>
</dbReference>
<dbReference type="PRINTS" id="PR00983">
    <property type="entry name" value="TRNASYNTHCYS"/>
</dbReference>
<dbReference type="SUPFAM" id="SSF52374">
    <property type="entry name" value="Nucleotidylyl transferase"/>
    <property type="match status" value="1"/>
</dbReference>
<feature type="chain" id="PRO_0000400445" description="L-cysteine:1D-myo-inositol 2-amino-2-deoxy-alpha-D-glucopyranoside ligase">
    <location>
        <begin position="1"/>
        <end position="413"/>
    </location>
</feature>
<feature type="short sequence motif" description="'HIGH' region" evidence="1">
    <location>
        <begin position="17"/>
        <end position="27"/>
    </location>
</feature>
<feature type="short sequence motif" description="'ERGGDP' region" evidence="1">
    <location>
        <begin position="155"/>
        <end position="160"/>
    </location>
</feature>
<feature type="short sequence motif" description="'KMSKS' region" evidence="1">
    <location>
        <begin position="257"/>
        <end position="261"/>
    </location>
</feature>
<feature type="binding site" evidence="1">
    <location>
        <begin position="15"/>
        <end position="18"/>
    </location>
    <ligand>
        <name>L-cysteinyl-5'-AMP</name>
        <dbReference type="ChEBI" id="CHEBI:144924"/>
    </ligand>
</feature>
<feature type="binding site" evidence="1">
    <location>
        <position position="15"/>
    </location>
    <ligand>
        <name>Zn(2+)</name>
        <dbReference type="ChEBI" id="CHEBI:29105"/>
    </ligand>
</feature>
<feature type="binding site" evidence="1">
    <location>
        <position position="30"/>
    </location>
    <ligand>
        <name>L-cysteinyl-5'-AMP</name>
        <dbReference type="ChEBI" id="CHEBI:144924"/>
    </ligand>
</feature>
<feature type="binding site" evidence="1">
    <location>
        <begin position="53"/>
        <end position="55"/>
    </location>
    <ligand>
        <name>L-cysteinyl-5'-AMP</name>
        <dbReference type="ChEBI" id="CHEBI:144924"/>
    </ligand>
</feature>
<feature type="binding site" evidence="1">
    <location>
        <position position="195"/>
    </location>
    <ligand>
        <name>L-cysteinyl-5'-AMP</name>
        <dbReference type="ChEBI" id="CHEBI:144924"/>
    </ligand>
</feature>
<feature type="binding site" evidence="1">
    <location>
        <position position="199"/>
    </location>
    <ligand>
        <name>Zn(2+)</name>
        <dbReference type="ChEBI" id="CHEBI:29105"/>
    </ligand>
</feature>
<feature type="binding site" evidence="1">
    <location>
        <begin position="217"/>
        <end position="219"/>
    </location>
    <ligand>
        <name>L-cysteinyl-5'-AMP</name>
        <dbReference type="ChEBI" id="CHEBI:144924"/>
    </ligand>
</feature>
<feature type="binding site" evidence="1">
    <location>
        <position position="224"/>
    </location>
    <ligand>
        <name>Zn(2+)</name>
        <dbReference type="ChEBI" id="CHEBI:29105"/>
    </ligand>
</feature>
<feature type="binding site" evidence="1">
    <location>
        <position position="251"/>
    </location>
    <ligand>
        <name>L-cysteinyl-5'-AMP</name>
        <dbReference type="ChEBI" id="CHEBI:144924"/>
    </ligand>
</feature>
<reference key="1">
    <citation type="journal article" date="2007" name="Genome Res.">
        <title>Genome characteristics of facultatively symbiotic Frankia sp. strains reflect host range and host plant biogeography.</title>
        <authorList>
            <person name="Normand P."/>
            <person name="Lapierre P."/>
            <person name="Tisa L.S."/>
            <person name="Gogarten J.P."/>
            <person name="Alloisio N."/>
            <person name="Bagnarol E."/>
            <person name="Bassi C.A."/>
            <person name="Berry A.M."/>
            <person name="Bickhart D.M."/>
            <person name="Choisne N."/>
            <person name="Couloux A."/>
            <person name="Cournoyer B."/>
            <person name="Cruveiller S."/>
            <person name="Daubin V."/>
            <person name="Demange N."/>
            <person name="Francino M.P."/>
            <person name="Goltsman E."/>
            <person name="Huang Y."/>
            <person name="Kopp O.R."/>
            <person name="Labarre L."/>
            <person name="Lapidus A."/>
            <person name="Lavire C."/>
            <person name="Marechal J."/>
            <person name="Martinez M."/>
            <person name="Mastronunzio J.E."/>
            <person name="Mullin B.C."/>
            <person name="Niemann J."/>
            <person name="Pujic P."/>
            <person name="Rawnsley T."/>
            <person name="Rouy Z."/>
            <person name="Schenowitz C."/>
            <person name="Sellstedt A."/>
            <person name="Tavares F."/>
            <person name="Tomkins J.P."/>
            <person name="Vallenet D."/>
            <person name="Valverde C."/>
            <person name="Wall L.G."/>
            <person name="Wang Y."/>
            <person name="Medigue C."/>
            <person name="Benson D.R."/>
        </authorList>
    </citation>
    <scope>NUCLEOTIDE SEQUENCE [LARGE SCALE GENOMIC DNA]</scope>
    <source>
        <strain>DSM 45986 / CECT 9034 / ACN14a</strain>
    </source>
</reference>
<sequence length="413" mass="43602">MRALDSAPTAHLYVCGITPYDATHLGHAFTYLTYDLAQRVLRDSGHKVLYVQNVTDVDDPLLERADRDGLDWRDLAAREIALFREDMTALRMLAPDSYVGVVEAIPMIVDMVAELVDRGAAYHVDDDLYFSVAAAPAFGEISHLSRAEMLAICAERGGDPGRGGKKDPLDPLLWRARRPGEPSWPSPFGPGRPGWHIECSAIARHHLGGVVDLQGGGTDLSFPHHECSAAHAEVAAGARPFARSYVHTAMVSLDGHKMSKSRGNLEFVSRLRRAGTDLAALRLALLDHRHTADWEWSASLLTDAVARVGRWRAAVALPAGPDAQGVLAAVRERLADDLDAPGALAAVDAWVDAALADAGGGPVGGSVGVGSSGGSLRGSGGAASAGGEAPALVARLVDTLLGVDLEPVRPRGS</sequence>